<sequence>MAKMQSKMQSDKPDDGMREKMIAVNRVTKVVKGGRIMGFAALAVVGDGDGRIGMGKGKSKEVPVAVQKAMEEARRKMIKVTLKNGTLQHTVTGKHGASSVLMLPAKDGTGVIAGGPMRAIFEVMGVTNVVAKSTGSTNPYNMVRATLDGLAKMNTASEIAAKRGKSVEEILG</sequence>
<accession>A6T3I7</accession>
<dbReference type="EMBL" id="CP000269">
    <property type="protein sequence ID" value="ABR88390.1"/>
    <property type="molecule type" value="Genomic_DNA"/>
</dbReference>
<dbReference type="RefSeq" id="WP_012081234.1">
    <property type="nucleotide sequence ID" value="NC_009659.1"/>
</dbReference>
<dbReference type="SMR" id="A6T3I7"/>
<dbReference type="STRING" id="375286.mma_3394"/>
<dbReference type="KEGG" id="mms:mma_3394"/>
<dbReference type="eggNOG" id="COG0098">
    <property type="taxonomic scope" value="Bacteria"/>
</dbReference>
<dbReference type="HOGENOM" id="CLU_065898_2_2_4"/>
<dbReference type="OrthoDB" id="9809045at2"/>
<dbReference type="Proteomes" id="UP000006388">
    <property type="component" value="Chromosome"/>
</dbReference>
<dbReference type="GO" id="GO:0015935">
    <property type="term" value="C:small ribosomal subunit"/>
    <property type="evidence" value="ECO:0007669"/>
    <property type="project" value="InterPro"/>
</dbReference>
<dbReference type="GO" id="GO:0019843">
    <property type="term" value="F:rRNA binding"/>
    <property type="evidence" value="ECO:0007669"/>
    <property type="project" value="UniProtKB-UniRule"/>
</dbReference>
<dbReference type="GO" id="GO:0003735">
    <property type="term" value="F:structural constituent of ribosome"/>
    <property type="evidence" value="ECO:0007669"/>
    <property type="project" value="InterPro"/>
</dbReference>
<dbReference type="GO" id="GO:0006412">
    <property type="term" value="P:translation"/>
    <property type="evidence" value="ECO:0007669"/>
    <property type="project" value="UniProtKB-UniRule"/>
</dbReference>
<dbReference type="FunFam" id="3.30.160.20:FF:000001">
    <property type="entry name" value="30S ribosomal protein S5"/>
    <property type="match status" value="1"/>
</dbReference>
<dbReference type="FunFam" id="3.30.230.10:FF:000002">
    <property type="entry name" value="30S ribosomal protein S5"/>
    <property type="match status" value="1"/>
</dbReference>
<dbReference type="Gene3D" id="3.30.160.20">
    <property type="match status" value="1"/>
</dbReference>
<dbReference type="Gene3D" id="3.30.230.10">
    <property type="match status" value="1"/>
</dbReference>
<dbReference type="HAMAP" id="MF_01307_B">
    <property type="entry name" value="Ribosomal_uS5_B"/>
    <property type="match status" value="1"/>
</dbReference>
<dbReference type="InterPro" id="IPR020568">
    <property type="entry name" value="Ribosomal_Su5_D2-typ_SF"/>
</dbReference>
<dbReference type="InterPro" id="IPR000851">
    <property type="entry name" value="Ribosomal_uS5"/>
</dbReference>
<dbReference type="InterPro" id="IPR005712">
    <property type="entry name" value="Ribosomal_uS5_bac-type"/>
</dbReference>
<dbReference type="InterPro" id="IPR005324">
    <property type="entry name" value="Ribosomal_uS5_C"/>
</dbReference>
<dbReference type="InterPro" id="IPR013810">
    <property type="entry name" value="Ribosomal_uS5_N"/>
</dbReference>
<dbReference type="InterPro" id="IPR018192">
    <property type="entry name" value="Ribosomal_uS5_N_CS"/>
</dbReference>
<dbReference type="InterPro" id="IPR014721">
    <property type="entry name" value="Ribsml_uS5_D2-typ_fold_subgr"/>
</dbReference>
<dbReference type="NCBIfam" id="TIGR01021">
    <property type="entry name" value="rpsE_bact"/>
    <property type="match status" value="1"/>
</dbReference>
<dbReference type="PANTHER" id="PTHR48277">
    <property type="entry name" value="MITOCHONDRIAL RIBOSOMAL PROTEIN S5"/>
    <property type="match status" value="1"/>
</dbReference>
<dbReference type="PANTHER" id="PTHR48277:SF1">
    <property type="entry name" value="MITOCHONDRIAL RIBOSOMAL PROTEIN S5"/>
    <property type="match status" value="1"/>
</dbReference>
<dbReference type="Pfam" id="PF00333">
    <property type="entry name" value="Ribosomal_S5"/>
    <property type="match status" value="1"/>
</dbReference>
<dbReference type="Pfam" id="PF03719">
    <property type="entry name" value="Ribosomal_S5_C"/>
    <property type="match status" value="1"/>
</dbReference>
<dbReference type="SUPFAM" id="SSF54768">
    <property type="entry name" value="dsRNA-binding domain-like"/>
    <property type="match status" value="1"/>
</dbReference>
<dbReference type="SUPFAM" id="SSF54211">
    <property type="entry name" value="Ribosomal protein S5 domain 2-like"/>
    <property type="match status" value="1"/>
</dbReference>
<dbReference type="PROSITE" id="PS00585">
    <property type="entry name" value="RIBOSOMAL_S5"/>
    <property type="match status" value="1"/>
</dbReference>
<dbReference type="PROSITE" id="PS50881">
    <property type="entry name" value="S5_DSRBD"/>
    <property type="match status" value="1"/>
</dbReference>
<protein>
    <recommendedName>
        <fullName evidence="1">Small ribosomal subunit protein uS5</fullName>
    </recommendedName>
    <alternativeName>
        <fullName evidence="2">30S ribosomal protein S5</fullName>
    </alternativeName>
</protein>
<name>RS5_JANMA</name>
<comment type="function">
    <text evidence="1">With S4 and S12 plays an important role in translational accuracy.</text>
</comment>
<comment type="function">
    <text evidence="1">Located at the back of the 30S subunit body where it stabilizes the conformation of the head with respect to the body.</text>
</comment>
<comment type="subunit">
    <text evidence="1">Part of the 30S ribosomal subunit. Contacts proteins S4 and S8.</text>
</comment>
<comment type="domain">
    <text>The N-terminal domain interacts with the head of the 30S subunit; the C-terminal domain interacts with the body and contacts protein S4. The interaction surface between S4 and S5 is involved in control of translational fidelity.</text>
</comment>
<comment type="similarity">
    <text evidence="1">Belongs to the universal ribosomal protein uS5 family.</text>
</comment>
<proteinExistence type="inferred from homology"/>
<reference key="1">
    <citation type="journal article" date="2007" name="PLoS Genet.">
        <title>Genome analysis of Minibacterium massiliensis highlights the convergent evolution of water-living bacteria.</title>
        <authorList>
            <person name="Audic S."/>
            <person name="Robert C."/>
            <person name="Campagna B."/>
            <person name="Parinello H."/>
            <person name="Claverie J.-M."/>
            <person name="Raoult D."/>
            <person name="Drancourt M."/>
        </authorList>
    </citation>
    <scope>NUCLEOTIDE SEQUENCE [LARGE SCALE GENOMIC DNA]</scope>
    <source>
        <strain>Marseille</strain>
    </source>
</reference>
<keyword id="KW-0687">Ribonucleoprotein</keyword>
<keyword id="KW-0689">Ribosomal protein</keyword>
<keyword id="KW-0694">RNA-binding</keyword>
<keyword id="KW-0699">rRNA-binding</keyword>
<evidence type="ECO:0000255" key="1">
    <source>
        <dbReference type="HAMAP-Rule" id="MF_01307"/>
    </source>
</evidence>
<evidence type="ECO:0000305" key="2"/>
<feature type="chain" id="PRO_0000323137" description="Small ribosomal subunit protein uS5">
    <location>
        <begin position="1"/>
        <end position="172"/>
    </location>
</feature>
<feature type="domain" description="S5 DRBM" evidence="1">
    <location>
        <begin position="17"/>
        <end position="80"/>
    </location>
</feature>
<gene>
    <name evidence="1" type="primary">rpsE</name>
    <name type="ordered locus">mma_3394</name>
</gene>
<organism>
    <name type="scientific">Janthinobacterium sp. (strain Marseille)</name>
    <name type="common">Minibacterium massiliensis</name>
    <dbReference type="NCBI Taxonomy" id="375286"/>
    <lineage>
        <taxon>Bacteria</taxon>
        <taxon>Pseudomonadati</taxon>
        <taxon>Pseudomonadota</taxon>
        <taxon>Betaproteobacteria</taxon>
        <taxon>Burkholderiales</taxon>
        <taxon>Oxalobacteraceae</taxon>
        <taxon>Janthinobacterium</taxon>
    </lineage>
</organism>